<gene>
    <name evidence="1" type="primary">atpD</name>
    <name type="ordered locus">KPN78578_40960</name>
    <name type="ORF">KPN_04137</name>
</gene>
<comment type="function">
    <text evidence="1">Produces ATP from ADP in the presence of a proton gradient across the membrane. The catalytic sites are hosted primarily by the beta subunits.</text>
</comment>
<comment type="catalytic activity">
    <reaction evidence="1">
        <text>ATP + H2O + 4 H(+)(in) = ADP + phosphate + 5 H(+)(out)</text>
        <dbReference type="Rhea" id="RHEA:57720"/>
        <dbReference type="ChEBI" id="CHEBI:15377"/>
        <dbReference type="ChEBI" id="CHEBI:15378"/>
        <dbReference type="ChEBI" id="CHEBI:30616"/>
        <dbReference type="ChEBI" id="CHEBI:43474"/>
        <dbReference type="ChEBI" id="CHEBI:456216"/>
        <dbReference type="EC" id="7.1.2.2"/>
    </reaction>
</comment>
<comment type="subunit">
    <text evidence="1">F-type ATPases have 2 components, CF(1) - the catalytic core - and CF(0) - the membrane proton channel. CF(1) has five subunits: alpha(3), beta(3), gamma(1), delta(1), epsilon(1). CF(0) has three main subunits: a(1), b(2) and c(9-12). The alpha and beta chains form an alternating ring which encloses part of the gamma chain. CF(1) is attached to CF(0) by a central stalk formed by the gamma and epsilon chains, while a peripheral stalk is formed by the delta and b chains.</text>
</comment>
<comment type="subcellular location">
    <subcellularLocation>
        <location evidence="1">Cell inner membrane</location>
        <topology evidence="1">Peripheral membrane protein</topology>
    </subcellularLocation>
</comment>
<comment type="similarity">
    <text evidence="1">Belongs to the ATPase alpha/beta chains family.</text>
</comment>
<organism>
    <name type="scientific">Klebsiella pneumoniae subsp. pneumoniae (strain ATCC 700721 / MGH 78578)</name>
    <dbReference type="NCBI Taxonomy" id="272620"/>
    <lineage>
        <taxon>Bacteria</taxon>
        <taxon>Pseudomonadati</taxon>
        <taxon>Pseudomonadota</taxon>
        <taxon>Gammaproteobacteria</taxon>
        <taxon>Enterobacterales</taxon>
        <taxon>Enterobacteriaceae</taxon>
        <taxon>Klebsiella/Raoultella group</taxon>
        <taxon>Klebsiella</taxon>
        <taxon>Klebsiella pneumoniae complex</taxon>
    </lineage>
</organism>
<dbReference type="EC" id="7.1.2.2" evidence="1"/>
<dbReference type="EMBL" id="CP000647">
    <property type="protein sequence ID" value="ABR79520.1"/>
    <property type="molecule type" value="Genomic_DNA"/>
</dbReference>
<dbReference type="RefSeq" id="WP_004144997.1">
    <property type="nucleotide sequence ID" value="NC_009648.1"/>
</dbReference>
<dbReference type="SMR" id="A6TG36"/>
<dbReference type="STRING" id="272620.KPN_04137"/>
<dbReference type="jPOST" id="A6TG36"/>
<dbReference type="PaxDb" id="272620-KPN_04137"/>
<dbReference type="EnsemblBacteria" id="ABR79520">
    <property type="protein sequence ID" value="ABR79520"/>
    <property type="gene ID" value="KPN_04137"/>
</dbReference>
<dbReference type="GeneID" id="69757986"/>
<dbReference type="KEGG" id="kpn:KPN_04137"/>
<dbReference type="HOGENOM" id="CLU_022398_0_2_6"/>
<dbReference type="Proteomes" id="UP000000265">
    <property type="component" value="Chromosome"/>
</dbReference>
<dbReference type="GO" id="GO:0005886">
    <property type="term" value="C:plasma membrane"/>
    <property type="evidence" value="ECO:0007669"/>
    <property type="project" value="UniProtKB-SubCell"/>
</dbReference>
<dbReference type="GO" id="GO:0045259">
    <property type="term" value="C:proton-transporting ATP synthase complex"/>
    <property type="evidence" value="ECO:0007669"/>
    <property type="project" value="UniProtKB-KW"/>
</dbReference>
<dbReference type="GO" id="GO:0005524">
    <property type="term" value="F:ATP binding"/>
    <property type="evidence" value="ECO:0007669"/>
    <property type="project" value="UniProtKB-UniRule"/>
</dbReference>
<dbReference type="GO" id="GO:0016887">
    <property type="term" value="F:ATP hydrolysis activity"/>
    <property type="evidence" value="ECO:0007669"/>
    <property type="project" value="InterPro"/>
</dbReference>
<dbReference type="GO" id="GO:0046933">
    <property type="term" value="F:proton-transporting ATP synthase activity, rotational mechanism"/>
    <property type="evidence" value="ECO:0007669"/>
    <property type="project" value="UniProtKB-UniRule"/>
</dbReference>
<dbReference type="CDD" id="cd18110">
    <property type="entry name" value="ATP-synt_F1_beta_C"/>
    <property type="match status" value="1"/>
</dbReference>
<dbReference type="CDD" id="cd18115">
    <property type="entry name" value="ATP-synt_F1_beta_N"/>
    <property type="match status" value="1"/>
</dbReference>
<dbReference type="CDD" id="cd01133">
    <property type="entry name" value="F1-ATPase_beta_CD"/>
    <property type="match status" value="1"/>
</dbReference>
<dbReference type="FunFam" id="1.10.1140.10:FF:000001">
    <property type="entry name" value="ATP synthase subunit beta"/>
    <property type="match status" value="1"/>
</dbReference>
<dbReference type="FunFam" id="2.40.10.170:FF:000003">
    <property type="entry name" value="ATP synthase subunit beta"/>
    <property type="match status" value="1"/>
</dbReference>
<dbReference type="FunFam" id="3.40.50.300:FF:000004">
    <property type="entry name" value="ATP synthase subunit beta"/>
    <property type="match status" value="1"/>
</dbReference>
<dbReference type="Gene3D" id="2.40.10.170">
    <property type="match status" value="1"/>
</dbReference>
<dbReference type="Gene3D" id="1.10.1140.10">
    <property type="entry name" value="Bovine Mitochondrial F1-atpase, Atp Synthase Beta Chain, Chain D, domain 3"/>
    <property type="match status" value="1"/>
</dbReference>
<dbReference type="Gene3D" id="3.40.50.300">
    <property type="entry name" value="P-loop containing nucleotide triphosphate hydrolases"/>
    <property type="match status" value="1"/>
</dbReference>
<dbReference type="HAMAP" id="MF_01347">
    <property type="entry name" value="ATP_synth_beta_bact"/>
    <property type="match status" value="1"/>
</dbReference>
<dbReference type="InterPro" id="IPR003593">
    <property type="entry name" value="AAA+_ATPase"/>
</dbReference>
<dbReference type="InterPro" id="IPR055190">
    <property type="entry name" value="ATP-synt_VA_C"/>
</dbReference>
<dbReference type="InterPro" id="IPR005722">
    <property type="entry name" value="ATP_synth_F1_bsu"/>
</dbReference>
<dbReference type="InterPro" id="IPR020003">
    <property type="entry name" value="ATPase_a/bsu_AS"/>
</dbReference>
<dbReference type="InterPro" id="IPR050053">
    <property type="entry name" value="ATPase_alpha/beta_chains"/>
</dbReference>
<dbReference type="InterPro" id="IPR004100">
    <property type="entry name" value="ATPase_F1/V1/A1_a/bsu_N"/>
</dbReference>
<dbReference type="InterPro" id="IPR036121">
    <property type="entry name" value="ATPase_F1/V1/A1_a/bsu_N_sf"/>
</dbReference>
<dbReference type="InterPro" id="IPR000194">
    <property type="entry name" value="ATPase_F1/V1/A1_a/bsu_nucl-bd"/>
</dbReference>
<dbReference type="InterPro" id="IPR024034">
    <property type="entry name" value="ATPase_F1/V1_b/a_C"/>
</dbReference>
<dbReference type="InterPro" id="IPR027417">
    <property type="entry name" value="P-loop_NTPase"/>
</dbReference>
<dbReference type="NCBIfam" id="TIGR01039">
    <property type="entry name" value="atpD"/>
    <property type="match status" value="1"/>
</dbReference>
<dbReference type="PANTHER" id="PTHR15184">
    <property type="entry name" value="ATP SYNTHASE"/>
    <property type="match status" value="1"/>
</dbReference>
<dbReference type="PANTHER" id="PTHR15184:SF71">
    <property type="entry name" value="ATP SYNTHASE SUBUNIT BETA, MITOCHONDRIAL"/>
    <property type="match status" value="1"/>
</dbReference>
<dbReference type="Pfam" id="PF00006">
    <property type="entry name" value="ATP-synt_ab"/>
    <property type="match status" value="1"/>
</dbReference>
<dbReference type="Pfam" id="PF02874">
    <property type="entry name" value="ATP-synt_ab_N"/>
    <property type="match status" value="1"/>
</dbReference>
<dbReference type="Pfam" id="PF22919">
    <property type="entry name" value="ATP-synt_VA_C"/>
    <property type="match status" value="1"/>
</dbReference>
<dbReference type="SMART" id="SM00382">
    <property type="entry name" value="AAA"/>
    <property type="match status" value="1"/>
</dbReference>
<dbReference type="SUPFAM" id="SSF47917">
    <property type="entry name" value="C-terminal domain of alpha and beta subunits of F1 ATP synthase"/>
    <property type="match status" value="1"/>
</dbReference>
<dbReference type="SUPFAM" id="SSF50615">
    <property type="entry name" value="N-terminal domain of alpha and beta subunits of F1 ATP synthase"/>
    <property type="match status" value="1"/>
</dbReference>
<dbReference type="SUPFAM" id="SSF52540">
    <property type="entry name" value="P-loop containing nucleoside triphosphate hydrolases"/>
    <property type="match status" value="1"/>
</dbReference>
<dbReference type="PROSITE" id="PS00152">
    <property type="entry name" value="ATPASE_ALPHA_BETA"/>
    <property type="match status" value="1"/>
</dbReference>
<reference key="1">
    <citation type="submission" date="2006-09" db="EMBL/GenBank/DDBJ databases">
        <authorList>
            <consortium name="The Klebsiella pneumonia Genome Sequencing Project"/>
            <person name="McClelland M."/>
            <person name="Sanderson E.K."/>
            <person name="Spieth J."/>
            <person name="Clifton W.S."/>
            <person name="Latreille P."/>
            <person name="Sabo A."/>
            <person name="Pepin K."/>
            <person name="Bhonagiri V."/>
            <person name="Porwollik S."/>
            <person name="Ali J."/>
            <person name="Wilson R.K."/>
        </authorList>
    </citation>
    <scope>NUCLEOTIDE SEQUENCE [LARGE SCALE GENOMIC DNA]</scope>
    <source>
        <strain>ATCC 700721 / MGH 78578</strain>
    </source>
</reference>
<feature type="chain" id="PRO_1000055124" description="ATP synthase subunit beta">
    <location>
        <begin position="1"/>
        <end position="460"/>
    </location>
</feature>
<feature type="binding site" evidence="1">
    <location>
        <begin position="150"/>
        <end position="157"/>
    </location>
    <ligand>
        <name>ATP</name>
        <dbReference type="ChEBI" id="CHEBI:30616"/>
    </ligand>
</feature>
<proteinExistence type="inferred from homology"/>
<sequence length="460" mass="50210">MATGKIVQVIGAVVDVEFPQDAVPRVYEALEVQNGNEVLVLEVQQQLGGGIVRTIAMGSSDGLRRGLDVKDLEHPIEVPVGKATLGRIMNVLGQPVDMKGDIGEEERWAIHRAAPSYEELSSSQELLETGIKVIDLMCPFAKGGKVGLFGGAGVGKTVNMMELIRNIAIEHSGYSVFAGVGERTREGNDFYHEMTDSNVIDKVSLVYGQMNEPPGNRLRVALTGLTMAEKFRDEGRDVLLFVDNIYRYTLAGTEVSALLGRMPSAVGYQPTLAEEMGVLQERITSTKTGSITSVQAVYVPADDLTDPSPATTFAHLDATVVLSRQIASLGIYPAVDPLDSTSRQLDPLVVGQEHYDTARGVQSILQRYQELKDIIAILGMDELSEEDKLVVARARKIQRFLSQPFFVAEVFTGSPGKYVALKDTIRGFKGIMEGEYDHLPEQAFYMVGSIDEAVEKAKKL</sequence>
<keyword id="KW-0066">ATP synthesis</keyword>
<keyword id="KW-0067">ATP-binding</keyword>
<keyword id="KW-0997">Cell inner membrane</keyword>
<keyword id="KW-1003">Cell membrane</keyword>
<keyword id="KW-0139">CF(1)</keyword>
<keyword id="KW-0375">Hydrogen ion transport</keyword>
<keyword id="KW-0406">Ion transport</keyword>
<keyword id="KW-0472">Membrane</keyword>
<keyword id="KW-0547">Nucleotide-binding</keyword>
<keyword id="KW-1278">Translocase</keyword>
<keyword id="KW-0813">Transport</keyword>
<name>ATPB_KLEP7</name>
<accession>A6TG36</accession>
<protein>
    <recommendedName>
        <fullName evidence="1">ATP synthase subunit beta</fullName>
        <ecNumber evidence="1">7.1.2.2</ecNumber>
    </recommendedName>
    <alternativeName>
        <fullName evidence="1">ATP synthase F1 sector subunit beta</fullName>
    </alternativeName>
    <alternativeName>
        <fullName evidence="1">F-ATPase subunit beta</fullName>
    </alternativeName>
</protein>
<evidence type="ECO:0000255" key="1">
    <source>
        <dbReference type="HAMAP-Rule" id="MF_01347"/>
    </source>
</evidence>